<sequence length="373" mass="40691">MTAQNPNLAALSAAGVSVWLDDLSRDRLRSGNLQELIDTKSVVGVTTNPSIFQKALSEGHTYDAQIAELAARGADVDATIRTVTTDDVRSACDVLVPQWEDSDGVDGRVSIEVDPRLAHETEKTIQQAIELWKIVDRPNLFIKIPATKAGLPAISAVLAEGISVNVTLIFSVQRYREVMDAYLTGMEKARQAGHSLSKIHSVASFFVSRVDTEIDKRLDRIGSRQALELRGQAGVANARLAYAAYREVFEDSDRYRSLKVDGARVQRPLWASTGVKNPDYSDTLYVTELVAPHTVNTMPEKTIDAVADHGVIQGDTVTGTASDAQAVFDQLGAIGIDLTDVFAVLEEEGVRKFEASWNELLQETRAHLDTAAQ</sequence>
<reference key="1">
    <citation type="journal article" date="2007" name="Proc. Natl. Acad. Sci. U.S.A.">
        <title>Genome plasticity of BCG and impact on vaccine efficacy.</title>
        <authorList>
            <person name="Brosch R."/>
            <person name="Gordon S.V."/>
            <person name="Garnier T."/>
            <person name="Eiglmeier K."/>
            <person name="Frigui W."/>
            <person name="Valenti P."/>
            <person name="Dos Santos S."/>
            <person name="Duthoy S."/>
            <person name="Lacroix C."/>
            <person name="Garcia-Pelayo C."/>
            <person name="Inwald J.K."/>
            <person name="Golby P."/>
            <person name="Garcia J.N."/>
            <person name="Hewinson R.G."/>
            <person name="Behr M.A."/>
            <person name="Quail M.A."/>
            <person name="Churcher C."/>
            <person name="Barrell B.G."/>
            <person name="Parkhill J."/>
            <person name="Cole S.T."/>
        </authorList>
    </citation>
    <scope>NUCLEOTIDE SEQUENCE [LARGE SCALE GENOMIC DNA]</scope>
    <source>
        <strain>BCG / Pasteur 1173P2</strain>
    </source>
</reference>
<keyword id="KW-0963">Cytoplasm</keyword>
<keyword id="KW-0570">Pentose shunt</keyword>
<keyword id="KW-0704">Schiff base</keyword>
<keyword id="KW-0808">Transferase</keyword>
<protein>
    <recommendedName>
        <fullName evidence="1">Transaldolase</fullName>
        <ecNumber evidence="1">2.2.1.2</ecNumber>
    </recommendedName>
</protein>
<comment type="function">
    <text evidence="1">Transaldolase is important for the balance of metabolites in the pentose-phosphate pathway.</text>
</comment>
<comment type="catalytic activity">
    <reaction evidence="1">
        <text>D-sedoheptulose 7-phosphate + D-glyceraldehyde 3-phosphate = D-erythrose 4-phosphate + beta-D-fructose 6-phosphate</text>
        <dbReference type="Rhea" id="RHEA:17053"/>
        <dbReference type="ChEBI" id="CHEBI:16897"/>
        <dbReference type="ChEBI" id="CHEBI:57483"/>
        <dbReference type="ChEBI" id="CHEBI:57634"/>
        <dbReference type="ChEBI" id="CHEBI:59776"/>
        <dbReference type="EC" id="2.2.1.2"/>
    </reaction>
</comment>
<comment type="pathway">
    <text evidence="1">Carbohydrate degradation; pentose phosphate pathway; D-glyceraldehyde 3-phosphate and beta-D-fructose 6-phosphate from D-ribose 5-phosphate and D-xylulose 5-phosphate (non-oxidative stage): step 2/3.</text>
</comment>
<comment type="subcellular location">
    <subcellularLocation>
        <location evidence="1">Cytoplasm</location>
    </subcellularLocation>
</comment>
<comment type="similarity">
    <text evidence="1">Belongs to the transaldolase family. Type 2 subfamily.</text>
</comment>
<gene>
    <name evidence="1" type="primary">tal</name>
    <name type="ordered locus">BCG_1509c</name>
</gene>
<feature type="chain" id="PRO_1000026526" description="Transaldolase">
    <location>
        <begin position="1"/>
        <end position="373"/>
    </location>
</feature>
<feature type="active site" description="Schiff-base intermediate with substrate" evidence="1">
    <location>
        <position position="143"/>
    </location>
</feature>
<dbReference type="EC" id="2.2.1.2" evidence="1"/>
<dbReference type="EMBL" id="AM408590">
    <property type="protein sequence ID" value="CAL71496.1"/>
    <property type="molecule type" value="Genomic_DNA"/>
</dbReference>
<dbReference type="RefSeq" id="WP_003407447.1">
    <property type="nucleotide sequence ID" value="NC_008769.1"/>
</dbReference>
<dbReference type="SMR" id="A1KIN7"/>
<dbReference type="KEGG" id="mbb:BCG_1509c"/>
<dbReference type="HOGENOM" id="CLU_050771_1_0_11"/>
<dbReference type="UniPathway" id="UPA00115">
    <property type="reaction ID" value="UER00414"/>
</dbReference>
<dbReference type="Proteomes" id="UP000001472">
    <property type="component" value="Chromosome"/>
</dbReference>
<dbReference type="GO" id="GO:0005737">
    <property type="term" value="C:cytoplasm"/>
    <property type="evidence" value="ECO:0007669"/>
    <property type="project" value="UniProtKB-SubCell"/>
</dbReference>
<dbReference type="GO" id="GO:0004801">
    <property type="term" value="F:transaldolase activity"/>
    <property type="evidence" value="ECO:0007669"/>
    <property type="project" value="UniProtKB-UniRule"/>
</dbReference>
<dbReference type="GO" id="GO:0005975">
    <property type="term" value="P:carbohydrate metabolic process"/>
    <property type="evidence" value="ECO:0007669"/>
    <property type="project" value="InterPro"/>
</dbReference>
<dbReference type="GO" id="GO:0006098">
    <property type="term" value="P:pentose-phosphate shunt"/>
    <property type="evidence" value="ECO:0007669"/>
    <property type="project" value="UniProtKB-UniRule"/>
</dbReference>
<dbReference type="CDD" id="cd00955">
    <property type="entry name" value="Transaldolase_like"/>
    <property type="match status" value="1"/>
</dbReference>
<dbReference type="FunFam" id="3.20.20.70:FF:000174">
    <property type="entry name" value="Transaldolase type"/>
    <property type="match status" value="1"/>
</dbReference>
<dbReference type="Gene3D" id="3.20.20.70">
    <property type="entry name" value="Aldolase class I"/>
    <property type="match status" value="1"/>
</dbReference>
<dbReference type="HAMAP" id="MF_00493">
    <property type="entry name" value="Transaldolase_2"/>
    <property type="match status" value="1"/>
</dbReference>
<dbReference type="InterPro" id="IPR013785">
    <property type="entry name" value="Aldolase_TIM"/>
</dbReference>
<dbReference type="InterPro" id="IPR001585">
    <property type="entry name" value="TAL/FSA"/>
</dbReference>
<dbReference type="InterPro" id="IPR004732">
    <property type="entry name" value="Transaldolase_2"/>
</dbReference>
<dbReference type="InterPro" id="IPR018225">
    <property type="entry name" value="Transaldolase_AS"/>
</dbReference>
<dbReference type="NCBIfam" id="NF002881">
    <property type="entry name" value="PRK03343.1"/>
    <property type="match status" value="1"/>
</dbReference>
<dbReference type="NCBIfam" id="TIGR00876">
    <property type="entry name" value="tal_mycobact"/>
    <property type="match status" value="1"/>
</dbReference>
<dbReference type="PANTHER" id="PTHR10683">
    <property type="entry name" value="TRANSALDOLASE"/>
    <property type="match status" value="1"/>
</dbReference>
<dbReference type="PANTHER" id="PTHR10683:SF31">
    <property type="entry name" value="TRANSALDOLASE"/>
    <property type="match status" value="1"/>
</dbReference>
<dbReference type="Pfam" id="PF00923">
    <property type="entry name" value="TAL_FSA"/>
    <property type="match status" value="1"/>
</dbReference>
<dbReference type="PIRSF" id="PIRSF036915">
    <property type="entry name" value="Trnald_Bac_Plnt"/>
    <property type="match status" value="1"/>
</dbReference>
<dbReference type="SUPFAM" id="SSF51569">
    <property type="entry name" value="Aldolase"/>
    <property type="match status" value="1"/>
</dbReference>
<dbReference type="PROSITE" id="PS01054">
    <property type="entry name" value="TRANSALDOLASE_1"/>
    <property type="match status" value="1"/>
</dbReference>
<dbReference type="PROSITE" id="PS00958">
    <property type="entry name" value="TRANSALDOLASE_2"/>
    <property type="match status" value="1"/>
</dbReference>
<proteinExistence type="inferred from homology"/>
<evidence type="ECO:0000255" key="1">
    <source>
        <dbReference type="HAMAP-Rule" id="MF_00493"/>
    </source>
</evidence>
<accession>A1KIN7</accession>
<name>TAL_MYCBP</name>
<organism>
    <name type="scientific">Mycobacterium bovis (strain BCG / Pasteur 1173P2)</name>
    <dbReference type="NCBI Taxonomy" id="410289"/>
    <lineage>
        <taxon>Bacteria</taxon>
        <taxon>Bacillati</taxon>
        <taxon>Actinomycetota</taxon>
        <taxon>Actinomycetes</taxon>
        <taxon>Mycobacteriales</taxon>
        <taxon>Mycobacteriaceae</taxon>
        <taxon>Mycobacterium</taxon>
        <taxon>Mycobacterium tuberculosis complex</taxon>
    </lineage>
</organism>